<evidence type="ECO:0000255" key="1">
    <source>
        <dbReference type="HAMAP-Rule" id="MF_01636"/>
    </source>
</evidence>
<sequence length="488" mass="55040">MKYRDLRDFISKLEADGELRRVDVEVDPRLEMTEVCDRTLRAEGPAILFQKPKGYRMPVLGNLFGTPRRVALGMGAEDVSALREIGELLAFLRQPEPPKGLRDAWSQLPVFRKVLDMGPKKVRRAACQEVVVEGDDVDLGRLPVQTCWPGDAGPLITWALVVTRGPEKERQNLGIYRNQVIGRNRTIMRWLAHRGGALDFRDWQRERPGEPFPVAIALGADPATILGAVTPVPDSLSEYGFAGLLRGSKTELVKCLGPDLQVPASAEIVLEGHIHPDDTAPEGPFGDHTGYYNEVDHFPVFTVDRITHRRDPIYHSTYTGRPPDEPAILGVALNEVFVPILRKQFPEISDFYLPPEGCSYRMAVVTMKKQYPGHAKRVMLGVWSFLRQFMYTKFVIVTDDDVNARDWKDVIWAMTTRMDPKRDTVMIDNTPIDYLDFASPVSGLGSKIGFDATHKWPGETDREWGRPIVMDDETRARVDALWPKLGLD</sequence>
<comment type="function">
    <text evidence="1">Catalyzes the decarboxylation of 3-octaprenyl-4-hydroxy benzoate to 2-octaprenylphenol, an intermediate step in ubiquinone biosynthesis.</text>
</comment>
<comment type="catalytic activity">
    <reaction evidence="1">
        <text>a 4-hydroxy-3-(all-trans-polyprenyl)benzoate + H(+) = a 2-(all-trans-polyprenyl)phenol + CO2</text>
        <dbReference type="Rhea" id="RHEA:41680"/>
        <dbReference type="Rhea" id="RHEA-COMP:9514"/>
        <dbReference type="Rhea" id="RHEA-COMP:9516"/>
        <dbReference type="ChEBI" id="CHEBI:1269"/>
        <dbReference type="ChEBI" id="CHEBI:15378"/>
        <dbReference type="ChEBI" id="CHEBI:16526"/>
        <dbReference type="ChEBI" id="CHEBI:78396"/>
        <dbReference type="EC" id="4.1.1.98"/>
    </reaction>
</comment>
<comment type="cofactor">
    <cofactor evidence="1">
        <name>prenylated FMN</name>
        <dbReference type="ChEBI" id="CHEBI:87746"/>
    </cofactor>
    <text evidence="1">Binds 1 prenylated FMN per subunit.</text>
</comment>
<comment type="cofactor">
    <cofactor evidence="1">
        <name>Mn(2+)</name>
        <dbReference type="ChEBI" id="CHEBI:29035"/>
    </cofactor>
</comment>
<comment type="pathway">
    <text evidence="1">Cofactor biosynthesis; ubiquinone biosynthesis.</text>
</comment>
<comment type="subunit">
    <text evidence="1">Homohexamer.</text>
</comment>
<comment type="subcellular location">
    <subcellularLocation>
        <location evidence="1">Cell membrane</location>
        <topology evidence="1">Peripheral membrane protein</topology>
    </subcellularLocation>
</comment>
<comment type="similarity">
    <text evidence="1">Belongs to the UbiD family.</text>
</comment>
<proteinExistence type="inferred from homology"/>
<organism>
    <name type="scientific">Alkalilimnicola ehrlichii (strain ATCC BAA-1101 / DSM 17681 / MLHE-1)</name>
    <dbReference type="NCBI Taxonomy" id="187272"/>
    <lineage>
        <taxon>Bacteria</taxon>
        <taxon>Pseudomonadati</taxon>
        <taxon>Pseudomonadota</taxon>
        <taxon>Gammaproteobacteria</taxon>
        <taxon>Chromatiales</taxon>
        <taxon>Ectothiorhodospiraceae</taxon>
        <taxon>Alkalilimnicola</taxon>
    </lineage>
</organism>
<keyword id="KW-1003">Cell membrane</keyword>
<keyword id="KW-0210">Decarboxylase</keyword>
<keyword id="KW-0285">Flavoprotein</keyword>
<keyword id="KW-0288">FMN</keyword>
<keyword id="KW-0456">Lyase</keyword>
<keyword id="KW-0464">Manganese</keyword>
<keyword id="KW-0472">Membrane</keyword>
<keyword id="KW-0479">Metal-binding</keyword>
<keyword id="KW-1185">Reference proteome</keyword>
<keyword id="KW-0831">Ubiquinone biosynthesis</keyword>
<dbReference type="EC" id="4.1.1.98" evidence="1"/>
<dbReference type="EMBL" id="CP000453">
    <property type="protein sequence ID" value="ABI57871.1"/>
    <property type="molecule type" value="Genomic_DNA"/>
</dbReference>
<dbReference type="RefSeq" id="WP_011630264.1">
    <property type="nucleotide sequence ID" value="NC_008340.1"/>
</dbReference>
<dbReference type="SMR" id="Q0A5L6"/>
<dbReference type="KEGG" id="aeh:Mlg_2531"/>
<dbReference type="eggNOG" id="COG0043">
    <property type="taxonomic scope" value="Bacteria"/>
</dbReference>
<dbReference type="HOGENOM" id="CLU_023348_4_1_6"/>
<dbReference type="OrthoDB" id="9809841at2"/>
<dbReference type="UniPathway" id="UPA00232"/>
<dbReference type="Proteomes" id="UP000001962">
    <property type="component" value="Chromosome"/>
</dbReference>
<dbReference type="GO" id="GO:0005829">
    <property type="term" value="C:cytosol"/>
    <property type="evidence" value="ECO:0007669"/>
    <property type="project" value="TreeGrafter"/>
</dbReference>
<dbReference type="GO" id="GO:0005886">
    <property type="term" value="C:plasma membrane"/>
    <property type="evidence" value="ECO:0007669"/>
    <property type="project" value="UniProtKB-SubCell"/>
</dbReference>
<dbReference type="GO" id="GO:0008694">
    <property type="term" value="F:3-octaprenyl-4-hydroxybenzoate carboxy-lyase activity"/>
    <property type="evidence" value="ECO:0007669"/>
    <property type="project" value="UniProtKB-UniRule"/>
</dbReference>
<dbReference type="GO" id="GO:0046872">
    <property type="term" value="F:metal ion binding"/>
    <property type="evidence" value="ECO:0007669"/>
    <property type="project" value="UniProtKB-KW"/>
</dbReference>
<dbReference type="GO" id="GO:0006744">
    <property type="term" value="P:ubiquinone biosynthetic process"/>
    <property type="evidence" value="ECO:0007669"/>
    <property type="project" value="UniProtKB-UniRule"/>
</dbReference>
<dbReference type="FunFam" id="1.20.5.570:FF:000001">
    <property type="entry name" value="3-octaprenyl-4-hydroxybenzoate carboxy-lyase"/>
    <property type="match status" value="1"/>
</dbReference>
<dbReference type="FunFam" id="3.40.1670.10:FF:000001">
    <property type="entry name" value="3-octaprenyl-4-hydroxybenzoate carboxy-lyase"/>
    <property type="match status" value="1"/>
</dbReference>
<dbReference type="Gene3D" id="1.20.5.570">
    <property type="entry name" value="Single helix bin"/>
    <property type="match status" value="1"/>
</dbReference>
<dbReference type="Gene3D" id="3.40.1670.10">
    <property type="entry name" value="UbiD C-terminal domain-like"/>
    <property type="match status" value="1"/>
</dbReference>
<dbReference type="HAMAP" id="MF_01636">
    <property type="entry name" value="UbiD"/>
    <property type="match status" value="1"/>
</dbReference>
<dbReference type="InterPro" id="IPR002830">
    <property type="entry name" value="UbiD"/>
</dbReference>
<dbReference type="InterPro" id="IPR049381">
    <property type="entry name" value="UbiD-like_C"/>
</dbReference>
<dbReference type="InterPro" id="IPR049383">
    <property type="entry name" value="UbiD-like_N"/>
</dbReference>
<dbReference type="InterPro" id="IPR023677">
    <property type="entry name" value="UbiD_bacteria"/>
</dbReference>
<dbReference type="InterPro" id="IPR048304">
    <property type="entry name" value="UbiD_Rift_dom"/>
</dbReference>
<dbReference type="NCBIfam" id="NF008175">
    <property type="entry name" value="PRK10922.1"/>
    <property type="match status" value="1"/>
</dbReference>
<dbReference type="NCBIfam" id="TIGR00148">
    <property type="entry name" value="UbiD family decarboxylase"/>
    <property type="match status" value="1"/>
</dbReference>
<dbReference type="PANTHER" id="PTHR30108">
    <property type="entry name" value="3-OCTAPRENYL-4-HYDROXYBENZOATE CARBOXY-LYASE-RELATED"/>
    <property type="match status" value="1"/>
</dbReference>
<dbReference type="PANTHER" id="PTHR30108:SF17">
    <property type="entry name" value="FERULIC ACID DECARBOXYLASE 1"/>
    <property type="match status" value="1"/>
</dbReference>
<dbReference type="Pfam" id="PF01977">
    <property type="entry name" value="UbiD"/>
    <property type="match status" value="1"/>
</dbReference>
<dbReference type="Pfam" id="PF20696">
    <property type="entry name" value="UbiD_C"/>
    <property type="match status" value="1"/>
</dbReference>
<dbReference type="Pfam" id="PF20695">
    <property type="entry name" value="UbiD_N"/>
    <property type="match status" value="1"/>
</dbReference>
<dbReference type="SUPFAM" id="SSF50475">
    <property type="entry name" value="FMN-binding split barrel"/>
    <property type="match status" value="1"/>
</dbReference>
<dbReference type="SUPFAM" id="SSF143968">
    <property type="entry name" value="UbiD C-terminal domain-like"/>
    <property type="match status" value="1"/>
</dbReference>
<feature type="chain" id="PRO_0000267645" description="3-octaprenyl-4-hydroxybenzoate carboxy-lyase">
    <location>
        <begin position="1"/>
        <end position="488"/>
    </location>
</feature>
<feature type="active site" description="Proton donor" evidence="1">
    <location>
        <position position="287"/>
    </location>
</feature>
<feature type="binding site" evidence="1">
    <location>
        <position position="172"/>
    </location>
    <ligand>
        <name>Mn(2+)</name>
        <dbReference type="ChEBI" id="CHEBI:29035"/>
    </ligand>
</feature>
<feature type="binding site" evidence="1">
    <location>
        <begin position="175"/>
        <end position="177"/>
    </location>
    <ligand>
        <name>prenylated FMN</name>
        <dbReference type="ChEBI" id="CHEBI:87746"/>
    </ligand>
</feature>
<feature type="binding site" evidence="1">
    <location>
        <begin position="189"/>
        <end position="191"/>
    </location>
    <ligand>
        <name>prenylated FMN</name>
        <dbReference type="ChEBI" id="CHEBI:87746"/>
    </ligand>
</feature>
<feature type="binding site" evidence="1">
    <location>
        <begin position="194"/>
        <end position="195"/>
    </location>
    <ligand>
        <name>prenylated FMN</name>
        <dbReference type="ChEBI" id="CHEBI:87746"/>
    </ligand>
</feature>
<feature type="binding site" evidence="1">
    <location>
        <position position="238"/>
    </location>
    <ligand>
        <name>Mn(2+)</name>
        <dbReference type="ChEBI" id="CHEBI:29035"/>
    </ligand>
</feature>
<gene>
    <name evidence="1" type="primary">ubiD</name>
    <name type="ordered locus">Mlg_2531</name>
</gene>
<reference key="1">
    <citation type="submission" date="2006-08" db="EMBL/GenBank/DDBJ databases">
        <title>Complete sequence of Alkalilimnicola ehrilichei MLHE-1.</title>
        <authorList>
            <person name="Copeland A."/>
            <person name="Lucas S."/>
            <person name="Lapidus A."/>
            <person name="Barry K."/>
            <person name="Detter J.C."/>
            <person name="Glavina del Rio T."/>
            <person name="Hammon N."/>
            <person name="Israni S."/>
            <person name="Dalin E."/>
            <person name="Tice H."/>
            <person name="Pitluck S."/>
            <person name="Sims D."/>
            <person name="Brettin T."/>
            <person name="Bruce D."/>
            <person name="Han C."/>
            <person name="Tapia R."/>
            <person name="Gilna P."/>
            <person name="Schmutz J."/>
            <person name="Larimer F."/>
            <person name="Land M."/>
            <person name="Hauser L."/>
            <person name="Kyrpides N."/>
            <person name="Mikhailova N."/>
            <person name="Oremland R.S."/>
            <person name="Hoeft S.E."/>
            <person name="Switzer-Blum J."/>
            <person name="Kulp T."/>
            <person name="King G."/>
            <person name="Tabita R."/>
            <person name="Witte B."/>
            <person name="Santini J.M."/>
            <person name="Basu P."/>
            <person name="Hollibaugh J.T."/>
            <person name="Xie G."/>
            <person name="Stolz J.F."/>
            <person name="Richardson P."/>
        </authorList>
    </citation>
    <scope>NUCLEOTIDE SEQUENCE [LARGE SCALE GENOMIC DNA]</scope>
    <source>
        <strain>ATCC BAA-1101 / DSM 17681 / MLHE-1</strain>
    </source>
</reference>
<protein>
    <recommendedName>
        <fullName evidence="1">3-octaprenyl-4-hydroxybenzoate carboxy-lyase</fullName>
        <ecNumber evidence="1">4.1.1.98</ecNumber>
    </recommendedName>
    <alternativeName>
        <fullName evidence="1">Polyprenyl p-hydroxybenzoate decarboxylase</fullName>
    </alternativeName>
</protein>
<name>UBID_ALKEH</name>
<accession>Q0A5L6</accession>